<comment type="subcellular location">
    <subcellularLocation>
        <location>Mitochondrion</location>
    </subcellularLocation>
</comment>
<comment type="similarity">
    <text evidence="1">Belongs to the universal ribosomal protein uL5 family.</text>
</comment>
<keyword id="KW-0496">Mitochondrion</keyword>
<keyword id="KW-0687">Ribonucleoprotein</keyword>
<keyword id="KW-0689">Ribosomal protein</keyword>
<organism>
    <name type="scientific">Brassica napus</name>
    <name type="common">Rape</name>
    <dbReference type="NCBI Taxonomy" id="3708"/>
    <lineage>
        <taxon>Eukaryota</taxon>
        <taxon>Viridiplantae</taxon>
        <taxon>Streptophyta</taxon>
        <taxon>Embryophyta</taxon>
        <taxon>Tracheophyta</taxon>
        <taxon>Spermatophyta</taxon>
        <taxon>Magnoliopsida</taxon>
        <taxon>eudicotyledons</taxon>
        <taxon>Gunneridae</taxon>
        <taxon>Pentapetalae</taxon>
        <taxon>rosids</taxon>
        <taxon>malvids</taxon>
        <taxon>Brassicales</taxon>
        <taxon>Brassicaceae</taxon>
        <taxon>Brassiceae</taxon>
        <taxon>Brassica</taxon>
    </lineage>
</organism>
<feature type="chain" id="PRO_0000125074" description="Large ribosomal subunit protein uL5m">
    <location>
        <begin position="1"/>
        <end position="185"/>
    </location>
</feature>
<name>RM05_BRANA</name>
<protein>
    <recommendedName>
        <fullName evidence="1">Large ribosomal subunit protein uL5m</fullName>
    </recommendedName>
    <alternativeName>
        <fullName>60S ribosomal protein L5, mitochondrial</fullName>
    </alternativeName>
</protein>
<geneLocation type="mitochondrion"/>
<reference key="1">
    <citation type="journal article" date="1993" name="Curr. Genet.">
        <title>Genes for ribosomal proteins S3, L16, L5 and S14 are clustered in the mitochondrial genome of Brassica napus L.</title>
        <authorList>
            <person name="Ye F."/>
            <person name="Bernhardt J."/>
            <person name="Abel W.O."/>
        </authorList>
    </citation>
    <scope>NUCLEOTIDE SEQUENCE [GENOMIC DNA]</scope>
    <source>
        <tissue>Leaf</tissue>
    </source>
</reference>
<accession>P49388</accession>
<accession>Q96015</accession>
<dbReference type="EMBL" id="X63653">
    <property type="protein sequence ID" value="CAA45190.1"/>
    <property type="molecule type" value="Genomic_DNA"/>
</dbReference>
<dbReference type="PIR" id="S36915">
    <property type="entry name" value="S36915"/>
</dbReference>
<dbReference type="SMR" id="P49388"/>
<dbReference type="GO" id="GO:0005739">
    <property type="term" value="C:mitochondrion"/>
    <property type="evidence" value="ECO:0007669"/>
    <property type="project" value="UniProtKB-SubCell"/>
</dbReference>
<dbReference type="GO" id="GO:1990904">
    <property type="term" value="C:ribonucleoprotein complex"/>
    <property type="evidence" value="ECO:0007669"/>
    <property type="project" value="UniProtKB-KW"/>
</dbReference>
<dbReference type="GO" id="GO:0005840">
    <property type="term" value="C:ribosome"/>
    <property type="evidence" value="ECO:0007669"/>
    <property type="project" value="UniProtKB-KW"/>
</dbReference>
<dbReference type="GO" id="GO:0003735">
    <property type="term" value="F:structural constituent of ribosome"/>
    <property type="evidence" value="ECO:0007669"/>
    <property type="project" value="InterPro"/>
</dbReference>
<dbReference type="GO" id="GO:0006412">
    <property type="term" value="P:translation"/>
    <property type="evidence" value="ECO:0007669"/>
    <property type="project" value="InterPro"/>
</dbReference>
<dbReference type="FunFam" id="3.30.1440.10:FF:000003">
    <property type="entry name" value="Ribosomal protein L5"/>
    <property type="match status" value="1"/>
</dbReference>
<dbReference type="Gene3D" id="3.30.1440.10">
    <property type="match status" value="1"/>
</dbReference>
<dbReference type="InterPro" id="IPR002132">
    <property type="entry name" value="Ribosomal_uL5"/>
</dbReference>
<dbReference type="InterPro" id="IPR022803">
    <property type="entry name" value="Ribosomal_uL5_dom_sf"/>
</dbReference>
<dbReference type="PANTHER" id="PTHR11994">
    <property type="entry name" value="60S RIBOSOMAL PROTEIN L11-RELATED"/>
    <property type="match status" value="1"/>
</dbReference>
<dbReference type="SUPFAM" id="SSF55282">
    <property type="entry name" value="RL5-like"/>
    <property type="match status" value="1"/>
</dbReference>
<sequence>MFPLNFHYEDVSRQDPLLNRITPTLWKFLGSCEIRVVPNGPYNFIIKNGKLAMEIPRGQKFIQTQRGSTGKSFRSNPFLGSNKDKGYVSDLARQSTLRGHGMSNFSVRISTVMSLLDFPVEIRKNSIQFSMETEFCEFAPQLQDHFEIFEHIRGFNVTIVTSANTQDETLPLWSGFLQKDEGETQ</sequence>
<evidence type="ECO:0000305" key="1"/>
<proteinExistence type="inferred from homology"/>
<gene>
    <name type="primary">RPL5</name>
</gene>